<protein>
    <recommendedName>
        <fullName evidence="1">D-amino acid dehydrogenase</fullName>
        <ecNumber evidence="1">1.4.99.-</ecNumber>
    </recommendedName>
</protein>
<evidence type="ECO:0000255" key="1">
    <source>
        <dbReference type="HAMAP-Rule" id="MF_01202"/>
    </source>
</evidence>
<name>DADA_VIBC3</name>
<organism>
    <name type="scientific">Vibrio cholerae serotype O1 (strain ATCC 39541 / Classical Ogawa 395 / O395)</name>
    <dbReference type="NCBI Taxonomy" id="345073"/>
    <lineage>
        <taxon>Bacteria</taxon>
        <taxon>Pseudomonadati</taxon>
        <taxon>Pseudomonadota</taxon>
        <taxon>Gammaproteobacteria</taxon>
        <taxon>Vibrionales</taxon>
        <taxon>Vibrionaceae</taxon>
        <taxon>Vibrio</taxon>
    </lineage>
</organism>
<comment type="function">
    <text evidence="1">Oxidative deamination of D-amino acids.</text>
</comment>
<comment type="catalytic activity">
    <reaction evidence="1">
        <text>a D-alpha-amino acid + A + H2O = a 2-oxocarboxylate + AH2 + NH4(+)</text>
        <dbReference type="Rhea" id="RHEA:18125"/>
        <dbReference type="ChEBI" id="CHEBI:13193"/>
        <dbReference type="ChEBI" id="CHEBI:15377"/>
        <dbReference type="ChEBI" id="CHEBI:17499"/>
        <dbReference type="ChEBI" id="CHEBI:28938"/>
        <dbReference type="ChEBI" id="CHEBI:35179"/>
        <dbReference type="ChEBI" id="CHEBI:59871"/>
    </reaction>
</comment>
<comment type="cofactor">
    <cofactor evidence="1">
        <name>FAD</name>
        <dbReference type="ChEBI" id="CHEBI:57692"/>
    </cofactor>
</comment>
<comment type="pathway">
    <text>Amino-acid degradation; D-alanine degradation; NH(3) and pyruvate from D-alanine: step 1/1.</text>
</comment>
<comment type="similarity">
    <text evidence="1">Belongs to the DadA oxidoreductase family.</text>
</comment>
<keyword id="KW-0274">FAD</keyword>
<keyword id="KW-0285">Flavoprotein</keyword>
<keyword id="KW-0560">Oxidoreductase</keyword>
<feature type="chain" id="PRO_1000073102" description="D-amino acid dehydrogenase">
    <location>
        <begin position="1"/>
        <end position="421"/>
    </location>
</feature>
<feature type="binding site" evidence="1">
    <location>
        <begin position="4"/>
        <end position="18"/>
    </location>
    <ligand>
        <name>FAD</name>
        <dbReference type="ChEBI" id="CHEBI:57692"/>
    </ligand>
</feature>
<sequence length="421" mass="46327">MMEVLVLGSGVVGLTSAWYLAQAGHDVTVVDRQPRGAEETSFANAGQISYGYSSPWAAPGIPQKALKWMLEKHAPLKIQPSLDPALLSWMGKMLLNCQLSRYQVNKSRMLAIANYSRECLKALNQTYSLDYQGRQRGTLQVFRDEKQLTAIEKDMQLLAQSGVRFELLNVAQCLTHEPGLAPVQEKLVGGLWLPDDETGDYYLFCQQLTELAKQQGVRFHFDCHIQQLVCEGKKIIGVQTDLGLLKADAYVVALGSYSTSLLKPLGIEIPVYPVKGYSLTLPIIDEKFAPQSTVMDETYKVALTRFSDRIRVAGTAELAGFDPAIPEARKATIEMVARDLFPHGGDFAKGQFWTGFRPMTPDGTPIIGATPYTNLYTNTGHGTLGWTMACGSASILADVLTHGESPLSRLGLDLFRYPKAS</sequence>
<gene>
    <name evidence="1" type="primary">dadA</name>
    <name type="ordered locus">VC0395_A0313</name>
    <name type="ordered locus">VC395_0803</name>
</gene>
<proteinExistence type="inferred from homology"/>
<dbReference type="EC" id="1.4.99.-" evidence="1"/>
<dbReference type="EMBL" id="CP000627">
    <property type="protein sequence ID" value="ABQ20510.1"/>
    <property type="molecule type" value="Genomic_DNA"/>
</dbReference>
<dbReference type="EMBL" id="CP001235">
    <property type="protein sequence ID" value="ACP08820.1"/>
    <property type="molecule type" value="Genomic_DNA"/>
</dbReference>
<dbReference type="SMR" id="A5F3D0"/>
<dbReference type="KEGG" id="vco:VC0395_A0313"/>
<dbReference type="KEGG" id="vcr:VC395_0803"/>
<dbReference type="PATRIC" id="fig|345073.21.peg.775"/>
<dbReference type="eggNOG" id="COG0665">
    <property type="taxonomic scope" value="Bacteria"/>
</dbReference>
<dbReference type="HOGENOM" id="CLU_007884_9_2_6"/>
<dbReference type="OrthoDB" id="9815989at2"/>
<dbReference type="UniPathway" id="UPA00043">
    <property type="reaction ID" value="UER00498"/>
</dbReference>
<dbReference type="Proteomes" id="UP000000249">
    <property type="component" value="Chromosome 2"/>
</dbReference>
<dbReference type="GO" id="GO:0005737">
    <property type="term" value="C:cytoplasm"/>
    <property type="evidence" value="ECO:0007669"/>
    <property type="project" value="TreeGrafter"/>
</dbReference>
<dbReference type="GO" id="GO:0005886">
    <property type="term" value="C:plasma membrane"/>
    <property type="evidence" value="ECO:0007669"/>
    <property type="project" value="TreeGrafter"/>
</dbReference>
<dbReference type="GO" id="GO:0008718">
    <property type="term" value="F:D-amino-acid dehydrogenase activity"/>
    <property type="evidence" value="ECO:0007669"/>
    <property type="project" value="UniProtKB-UniRule"/>
</dbReference>
<dbReference type="GO" id="GO:0055130">
    <property type="term" value="P:D-alanine catabolic process"/>
    <property type="evidence" value="ECO:0007669"/>
    <property type="project" value="UniProtKB-UniPathway"/>
</dbReference>
<dbReference type="FunFam" id="3.50.50.60:FF:000020">
    <property type="entry name" value="D-amino acid dehydrogenase"/>
    <property type="match status" value="1"/>
</dbReference>
<dbReference type="Gene3D" id="3.30.9.10">
    <property type="entry name" value="D-Amino Acid Oxidase, subunit A, domain 2"/>
    <property type="match status" value="1"/>
</dbReference>
<dbReference type="Gene3D" id="3.50.50.60">
    <property type="entry name" value="FAD/NAD(P)-binding domain"/>
    <property type="match status" value="2"/>
</dbReference>
<dbReference type="HAMAP" id="MF_01202">
    <property type="entry name" value="DadA"/>
    <property type="match status" value="1"/>
</dbReference>
<dbReference type="InterPro" id="IPR023080">
    <property type="entry name" value="DadA"/>
</dbReference>
<dbReference type="InterPro" id="IPR006076">
    <property type="entry name" value="FAD-dep_OxRdtase"/>
</dbReference>
<dbReference type="InterPro" id="IPR036188">
    <property type="entry name" value="FAD/NAD-bd_sf"/>
</dbReference>
<dbReference type="NCBIfam" id="NF001933">
    <property type="entry name" value="PRK00711.1"/>
    <property type="match status" value="1"/>
</dbReference>
<dbReference type="PANTHER" id="PTHR13847:SF280">
    <property type="entry name" value="D-AMINO ACID DEHYDROGENASE"/>
    <property type="match status" value="1"/>
</dbReference>
<dbReference type="PANTHER" id="PTHR13847">
    <property type="entry name" value="SARCOSINE DEHYDROGENASE-RELATED"/>
    <property type="match status" value="1"/>
</dbReference>
<dbReference type="Pfam" id="PF01266">
    <property type="entry name" value="DAO"/>
    <property type="match status" value="1"/>
</dbReference>
<dbReference type="SUPFAM" id="SSF54373">
    <property type="entry name" value="FAD-linked reductases, C-terminal domain"/>
    <property type="match status" value="1"/>
</dbReference>
<dbReference type="SUPFAM" id="SSF51905">
    <property type="entry name" value="FAD/NAD(P)-binding domain"/>
    <property type="match status" value="1"/>
</dbReference>
<reference key="1">
    <citation type="submission" date="2007-03" db="EMBL/GenBank/DDBJ databases">
        <authorList>
            <person name="Heidelberg J."/>
        </authorList>
    </citation>
    <scope>NUCLEOTIDE SEQUENCE [LARGE SCALE GENOMIC DNA]</scope>
    <source>
        <strain>ATCC 39541 / Classical Ogawa 395 / O395</strain>
    </source>
</reference>
<reference key="2">
    <citation type="journal article" date="2008" name="PLoS ONE">
        <title>A recalibrated molecular clock and independent origins for the cholera pandemic clones.</title>
        <authorList>
            <person name="Feng L."/>
            <person name="Reeves P.R."/>
            <person name="Lan R."/>
            <person name="Ren Y."/>
            <person name="Gao C."/>
            <person name="Zhou Z."/>
            <person name="Ren Y."/>
            <person name="Cheng J."/>
            <person name="Wang W."/>
            <person name="Wang J."/>
            <person name="Qian W."/>
            <person name="Li D."/>
            <person name="Wang L."/>
        </authorList>
    </citation>
    <scope>NUCLEOTIDE SEQUENCE [LARGE SCALE GENOMIC DNA]</scope>
    <source>
        <strain>ATCC 39541 / Classical Ogawa 395 / O395</strain>
    </source>
</reference>
<accession>A5F3D0</accession>
<accession>C3LYF4</accession>